<protein>
    <recommendedName>
        <fullName>Uncharacterized protein AF_2262</fullName>
    </recommendedName>
</protein>
<reference key="1">
    <citation type="journal article" date="1997" name="Nature">
        <title>The complete genome sequence of the hyperthermophilic, sulphate-reducing archaeon Archaeoglobus fulgidus.</title>
        <authorList>
            <person name="Klenk H.-P."/>
            <person name="Clayton R.A."/>
            <person name="Tomb J.-F."/>
            <person name="White O."/>
            <person name="Nelson K.E."/>
            <person name="Ketchum K.A."/>
            <person name="Dodson R.J."/>
            <person name="Gwinn M.L."/>
            <person name="Hickey E.K."/>
            <person name="Peterson J.D."/>
            <person name="Richardson D.L."/>
            <person name="Kerlavage A.R."/>
            <person name="Graham D.E."/>
            <person name="Kyrpides N.C."/>
            <person name="Fleischmann R.D."/>
            <person name="Quackenbush J."/>
            <person name="Lee N.H."/>
            <person name="Sutton G.G."/>
            <person name="Gill S.R."/>
            <person name="Kirkness E.F."/>
            <person name="Dougherty B.A."/>
            <person name="McKenney K."/>
            <person name="Adams M.D."/>
            <person name="Loftus B.J."/>
            <person name="Peterson S.N."/>
            <person name="Reich C.I."/>
            <person name="McNeil L.K."/>
            <person name="Badger J.H."/>
            <person name="Glodek A."/>
            <person name="Zhou L."/>
            <person name="Overbeek R."/>
            <person name="Gocayne J.D."/>
            <person name="Weidman J.F."/>
            <person name="McDonald L.A."/>
            <person name="Utterback T.R."/>
            <person name="Cotton M.D."/>
            <person name="Spriggs T."/>
            <person name="Artiach P."/>
            <person name="Kaine B.P."/>
            <person name="Sykes S.M."/>
            <person name="Sadow P.W."/>
            <person name="D'Andrea K.P."/>
            <person name="Bowman C."/>
            <person name="Fujii C."/>
            <person name="Garland S.A."/>
            <person name="Mason T.M."/>
            <person name="Olsen G.J."/>
            <person name="Fraser C.M."/>
            <person name="Smith H.O."/>
            <person name="Woese C.R."/>
            <person name="Venter J.C."/>
        </authorList>
    </citation>
    <scope>NUCLEOTIDE SEQUENCE [LARGE SCALE GENOMIC DNA]</scope>
    <source>
        <strain>ATCC 49558 / DSM 4304 / JCM 9628 / NBRC 100126 / VC-16</strain>
    </source>
</reference>
<gene>
    <name type="ordered locus">AF_2262</name>
</gene>
<dbReference type="EMBL" id="AE000782">
    <property type="protein sequence ID" value="AAB88999.1"/>
    <property type="molecule type" value="Genomic_DNA"/>
</dbReference>
<dbReference type="PIR" id="F69532">
    <property type="entry name" value="F69532"/>
</dbReference>
<dbReference type="RefSeq" id="WP_010879751.1">
    <property type="nucleotide sequence ID" value="NC_000917.1"/>
</dbReference>
<dbReference type="SMR" id="O28022"/>
<dbReference type="STRING" id="224325.AF_2262"/>
<dbReference type="PaxDb" id="224325-AF_2262"/>
<dbReference type="EnsemblBacteria" id="AAB88999">
    <property type="protein sequence ID" value="AAB88999"/>
    <property type="gene ID" value="AF_2262"/>
</dbReference>
<dbReference type="KEGG" id="afu:AF_2262"/>
<dbReference type="eggNOG" id="arCOG02716">
    <property type="taxonomic scope" value="Archaea"/>
</dbReference>
<dbReference type="HOGENOM" id="CLU_194241_1_1_2"/>
<dbReference type="OrthoDB" id="2666at2231"/>
<dbReference type="Proteomes" id="UP000002199">
    <property type="component" value="Chromosome"/>
</dbReference>
<sequence length="62" mass="7419">MEKLPHLLRHWVEHTKEHRERFEEVASKIESTHPEIAKKLKEAAEKYREVEEILKKAVDMVG</sequence>
<organism>
    <name type="scientific">Archaeoglobus fulgidus (strain ATCC 49558 / DSM 4304 / JCM 9628 / NBRC 100126 / VC-16)</name>
    <dbReference type="NCBI Taxonomy" id="224325"/>
    <lineage>
        <taxon>Archaea</taxon>
        <taxon>Methanobacteriati</taxon>
        <taxon>Methanobacteriota</taxon>
        <taxon>Archaeoglobi</taxon>
        <taxon>Archaeoglobales</taxon>
        <taxon>Archaeoglobaceae</taxon>
        <taxon>Archaeoglobus</taxon>
    </lineage>
</organism>
<feature type="chain" id="PRO_0000128129" description="Uncharacterized protein AF_2262">
    <location>
        <begin position="1"/>
        <end position="62"/>
    </location>
</feature>
<feature type="coiled-coil region" evidence="1">
    <location>
        <begin position="28"/>
        <end position="61"/>
    </location>
</feature>
<keyword id="KW-0175">Coiled coil</keyword>
<keyword id="KW-1185">Reference proteome</keyword>
<name>Y2262_ARCFU</name>
<proteinExistence type="predicted"/>
<evidence type="ECO:0000255" key="1"/>
<accession>O28022</accession>